<keyword id="KW-0175">Coiled coil</keyword>
<keyword id="KW-0488">Methylation</keyword>
<keyword id="KW-0597">Phosphoprotein</keyword>
<keyword id="KW-1185">Reference proteome</keyword>
<keyword id="KW-0879">Wnt signaling pathway</keyword>
<gene>
    <name type="primary">Dact3</name>
</gene>
<feature type="chain" id="PRO_0000264617" description="Dapper homolog 3">
    <location>
        <begin position="1"/>
        <end position="610"/>
    </location>
</feature>
<feature type="region of interest" description="Disordered" evidence="4">
    <location>
        <begin position="50"/>
        <end position="76"/>
    </location>
</feature>
<feature type="region of interest" description="Disordered" evidence="4">
    <location>
        <begin position="102"/>
        <end position="179"/>
    </location>
</feature>
<feature type="region of interest" description="Disordered" evidence="4">
    <location>
        <begin position="200"/>
        <end position="579"/>
    </location>
</feature>
<feature type="coiled-coil region" evidence="3">
    <location>
        <begin position="63"/>
        <end position="87"/>
    </location>
</feature>
<feature type="short sequence motif" description="PDZ-binding" evidence="1">
    <location>
        <begin position="607"/>
        <end position="610"/>
    </location>
</feature>
<feature type="compositionally biased region" description="Acidic residues" evidence="4">
    <location>
        <begin position="56"/>
        <end position="69"/>
    </location>
</feature>
<feature type="compositionally biased region" description="Low complexity" evidence="4">
    <location>
        <begin position="120"/>
        <end position="138"/>
    </location>
</feature>
<feature type="compositionally biased region" description="Pro residues" evidence="4">
    <location>
        <begin position="317"/>
        <end position="331"/>
    </location>
</feature>
<feature type="compositionally biased region" description="Low complexity" evidence="4">
    <location>
        <begin position="344"/>
        <end position="356"/>
    </location>
</feature>
<feature type="compositionally biased region" description="Pro residues" evidence="4">
    <location>
        <begin position="475"/>
        <end position="485"/>
    </location>
</feature>
<feature type="compositionally biased region" description="Low complexity" evidence="4">
    <location>
        <begin position="524"/>
        <end position="545"/>
    </location>
</feature>
<feature type="compositionally biased region" description="Gly residues" evidence="4">
    <location>
        <begin position="566"/>
        <end position="576"/>
    </location>
</feature>
<feature type="modified residue" description="Phosphoserine" evidence="2">
    <location>
        <position position="6"/>
    </location>
</feature>
<feature type="modified residue" description="Phosphoserine" evidence="8">
    <location>
        <position position="165"/>
    </location>
</feature>
<feature type="modified residue" description="Phosphoserine" evidence="8">
    <location>
        <position position="237"/>
    </location>
</feature>
<feature type="modified residue" description="Omega-N-methylarginine" evidence="9">
    <location>
        <position position="255"/>
    </location>
</feature>
<feature type="modified residue" description="Phosphoserine" evidence="2">
    <location>
        <position position="409"/>
    </location>
</feature>
<feature type="modified residue" description="Phosphoserine" evidence="8">
    <location>
        <position position="456"/>
    </location>
</feature>
<protein>
    <recommendedName>
        <fullName>Dapper homolog 3</fullName>
    </recommendedName>
    <alternativeName>
        <fullName>Dapper antagonist of catenin 3</fullName>
    </alternativeName>
</protein>
<proteinExistence type="evidence at protein level"/>
<organism>
    <name type="scientific">Mus musculus</name>
    <name type="common">Mouse</name>
    <dbReference type="NCBI Taxonomy" id="10090"/>
    <lineage>
        <taxon>Eukaryota</taxon>
        <taxon>Metazoa</taxon>
        <taxon>Chordata</taxon>
        <taxon>Craniata</taxon>
        <taxon>Vertebrata</taxon>
        <taxon>Euteleostomi</taxon>
        <taxon>Mammalia</taxon>
        <taxon>Eutheria</taxon>
        <taxon>Euarchontoglires</taxon>
        <taxon>Glires</taxon>
        <taxon>Rodentia</taxon>
        <taxon>Myomorpha</taxon>
        <taxon>Muroidea</taxon>
        <taxon>Muridae</taxon>
        <taxon>Murinae</taxon>
        <taxon>Mus</taxon>
        <taxon>Mus</taxon>
    </lineage>
</organism>
<reference key="1">
    <citation type="journal article" date="2006" name="Dev. Dyn.">
        <title>Three Dact gene family members are expressed during embryonic development and in the adult brains of mice.</title>
        <authorList>
            <person name="Fisher D.A."/>
            <person name="Kivimaee S."/>
            <person name="Hoshino J."/>
            <person name="Suriben R."/>
            <person name="Martin P.-M."/>
            <person name="Baxter N."/>
            <person name="Cheyette B.N.R."/>
        </authorList>
    </citation>
    <scope>NUCLEOTIDE SEQUENCE [MRNA]</scope>
    <scope>TISSUE SPECIFICITY</scope>
    <scope>DEVELOPMENTAL STAGE</scope>
    <source>
        <strain>C57BL/6J</strain>
        <tissue>Forebrain</tissue>
    </source>
</reference>
<reference key="2">
    <citation type="journal article" date="2010" name="Cell">
        <title>A tissue-specific atlas of mouse protein phosphorylation and expression.</title>
        <authorList>
            <person name="Huttlin E.L."/>
            <person name="Jedrychowski M.P."/>
            <person name="Elias J.E."/>
            <person name="Goswami T."/>
            <person name="Rad R."/>
            <person name="Beausoleil S.A."/>
            <person name="Villen J."/>
            <person name="Haas W."/>
            <person name="Sowa M.E."/>
            <person name="Gygi S.P."/>
        </authorList>
    </citation>
    <scope>PHOSPHORYLATION [LARGE SCALE ANALYSIS] AT SER-165; SER-237 AND SER-456</scope>
    <scope>IDENTIFICATION BY MASS SPECTROMETRY [LARGE SCALE ANALYSIS]</scope>
    <source>
        <tissue>Brain</tissue>
        <tissue>Kidney</tissue>
        <tissue>Lung</tissue>
        <tissue>Spleen</tissue>
        <tissue>Testis</tissue>
    </source>
</reference>
<reference key="3">
    <citation type="journal article" date="2011" name="BMC Biochem.">
        <title>All Dact (Dapper/Frodo) scaffold proteins dimerize and exhibit conserved interactions with Vangl, Dvl, and serine/threonine kinases.</title>
        <authorList>
            <person name="Kivimae S."/>
            <person name="Yang X.Y."/>
            <person name="Cheyette B.N."/>
        </authorList>
    </citation>
    <scope>PHOSPHORYLATION</scope>
    <scope>INTERACTION WITH DACT1; DACT2; CSNK1D; PKA; PKC; DVL1; DVL2; DVL3; VANGL1; VANGL2 AND CTNND1</scope>
</reference>
<reference key="4">
    <citation type="journal article" date="2014" name="Mol. Cell. Proteomics">
        <title>Immunoaffinity enrichment and mass spectrometry analysis of protein methylation.</title>
        <authorList>
            <person name="Guo A."/>
            <person name="Gu H."/>
            <person name="Zhou J."/>
            <person name="Mulhern D."/>
            <person name="Wang Y."/>
            <person name="Lee K.A."/>
            <person name="Yang V."/>
            <person name="Aguiar M."/>
            <person name="Kornhauser J."/>
            <person name="Jia X."/>
            <person name="Ren J."/>
            <person name="Beausoleil S.A."/>
            <person name="Silva J.C."/>
            <person name="Vemulapalli V."/>
            <person name="Bedford M.T."/>
            <person name="Comb M.J."/>
        </authorList>
    </citation>
    <scope>METHYLATION [LARGE SCALE ANALYSIS] AT ARG-255</scope>
    <scope>IDENTIFICATION BY MASS SPECTROMETRY [LARGE SCALE ANALYSIS]</scope>
    <source>
        <tissue>Brain</tissue>
    </source>
</reference>
<accession>Q0PHV7</accession>
<dbReference type="EMBL" id="DQ832319">
    <property type="protein sequence ID" value="ABH03019.1"/>
    <property type="molecule type" value="mRNA"/>
</dbReference>
<dbReference type="CCDS" id="CCDS39788.1"/>
<dbReference type="RefSeq" id="NP_001075124.1">
    <property type="nucleotide sequence ID" value="NM_001081655.1"/>
</dbReference>
<dbReference type="FunCoup" id="Q0PHV7">
    <property type="interactions" value="359"/>
</dbReference>
<dbReference type="IntAct" id="Q0PHV7">
    <property type="interactions" value="14"/>
</dbReference>
<dbReference type="STRING" id="10090.ENSMUSP00000104133"/>
<dbReference type="GlyGen" id="Q0PHV7">
    <property type="glycosylation" value="4 sites"/>
</dbReference>
<dbReference type="iPTMnet" id="Q0PHV7"/>
<dbReference type="PhosphoSitePlus" id="Q0PHV7"/>
<dbReference type="jPOST" id="Q0PHV7"/>
<dbReference type="PaxDb" id="10090-ENSMUSP00000104133"/>
<dbReference type="ProteomicsDB" id="279311"/>
<dbReference type="Pumba" id="Q0PHV7"/>
<dbReference type="Antibodypedia" id="31468">
    <property type="antibodies" value="212 antibodies from 26 providers"/>
</dbReference>
<dbReference type="Ensembl" id="ENSMUST00000108493.3">
    <property type="protein sequence ID" value="ENSMUSP00000104133.2"/>
    <property type="gene ID" value="ENSMUSG00000078794.5"/>
</dbReference>
<dbReference type="GeneID" id="629378"/>
<dbReference type="KEGG" id="mmu:629378"/>
<dbReference type="UCSC" id="uc009fij.1">
    <property type="organism name" value="mouse"/>
</dbReference>
<dbReference type="AGR" id="MGI:3654828"/>
<dbReference type="CTD" id="147906"/>
<dbReference type="MGI" id="MGI:3654828">
    <property type="gene designation" value="Dact3"/>
</dbReference>
<dbReference type="VEuPathDB" id="HostDB:ENSMUSG00000078794"/>
<dbReference type="eggNOG" id="KOG4119">
    <property type="taxonomic scope" value="Eukaryota"/>
</dbReference>
<dbReference type="GeneTree" id="ENSGT00950000183181"/>
<dbReference type="HOGENOM" id="CLU_031461_0_0_1"/>
<dbReference type="InParanoid" id="Q0PHV7"/>
<dbReference type="OMA" id="RYPPDPF"/>
<dbReference type="OrthoDB" id="9886203at2759"/>
<dbReference type="PhylomeDB" id="Q0PHV7"/>
<dbReference type="TreeFam" id="TF331300"/>
<dbReference type="BioGRID-ORCS" id="629378">
    <property type="hits" value="3 hits in 81 CRISPR screens"/>
</dbReference>
<dbReference type="CD-CODE" id="CE726F99">
    <property type="entry name" value="Postsynaptic density"/>
</dbReference>
<dbReference type="ChiTaRS" id="Dact3">
    <property type="organism name" value="mouse"/>
</dbReference>
<dbReference type="PRO" id="PR:Q0PHV7"/>
<dbReference type="Proteomes" id="UP000000589">
    <property type="component" value="Chromosome 7"/>
</dbReference>
<dbReference type="RNAct" id="Q0PHV7">
    <property type="molecule type" value="protein"/>
</dbReference>
<dbReference type="Bgee" id="ENSMUSG00000078794">
    <property type="expression patterns" value="Expressed in prefrontal cortex and 193 other cell types or tissues"/>
</dbReference>
<dbReference type="GO" id="GO:0005737">
    <property type="term" value="C:cytoplasm"/>
    <property type="evidence" value="ECO:0000314"/>
    <property type="project" value="MGI"/>
</dbReference>
<dbReference type="GO" id="GO:0070097">
    <property type="term" value="F:delta-catenin binding"/>
    <property type="evidence" value="ECO:0000314"/>
    <property type="project" value="UniProtKB"/>
</dbReference>
<dbReference type="GO" id="GO:0042802">
    <property type="term" value="F:identical protein binding"/>
    <property type="evidence" value="ECO:0000353"/>
    <property type="project" value="IntAct"/>
</dbReference>
<dbReference type="GO" id="GO:0051018">
    <property type="term" value="F:protein kinase A binding"/>
    <property type="evidence" value="ECO:0000314"/>
    <property type="project" value="UniProtKB"/>
</dbReference>
<dbReference type="GO" id="GO:0005080">
    <property type="term" value="F:protein kinase C binding"/>
    <property type="evidence" value="ECO:0000314"/>
    <property type="project" value="UniProtKB"/>
</dbReference>
<dbReference type="GO" id="GO:0060070">
    <property type="term" value="P:canonical Wnt signaling pathway"/>
    <property type="evidence" value="ECO:0000315"/>
    <property type="project" value="MGI"/>
</dbReference>
<dbReference type="GO" id="GO:0001837">
    <property type="term" value="P:epithelial to mesenchymal transition"/>
    <property type="evidence" value="ECO:0000315"/>
    <property type="project" value="MGI"/>
</dbReference>
<dbReference type="GO" id="GO:0090090">
    <property type="term" value="P:negative regulation of canonical Wnt signaling pathway"/>
    <property type="evidence" value="ECO:0000315"/>
    <property type="project" value="MGI"/>
</dbReference>
<dbReference type="GO" id="GO:0030308">
    <property type="term" value="P:negative regulation of cell growth"/>
    <property type="evidence" value="ECO:0000250"/>
    <property type="project" value="UniProtKB"/>
</dbReference>
<dbReference type="GO" id="GO:0010719">
    <property type="term" value="P:negative regulation of epithelial to mesenchymal transition"/>
    <property type="evidence" value="ECO:0000315"/>
    <property type="project" value="MGI"/>
</dbReference>
<dbReference type="GO" id="GO:0030178">
    <property type="term" value="P:negative regulation of Wnt signaling pathway"/>
    <property type="evidence" value="ECO:0000250"/>
    <property type="project" value="UniProtKB"/>
</dbReference>
<dbReference type="InterPro" id="IPR024843">
    <property type="entry name" value="Dapper"/>
</dbReference>
<dbReference type="PANTHER" id="PTHR15919:SF1">
    <property type="entry name" value="DAPPER HOMOLOG 3"/>
    <property type="match status" value="1"/>
</dbReference>
<dbReference type="PANTHER" id="PTHR15919">
    <property type="entry name" value="DAPPER-RELATED"/>
    <property type="match status" value="1"/>
</dbReference>
<dbReference type="Pfam" id="PF15268">
    <property type="entry name" value="Dapper"/>
    <property type="match status" value="2"/>
</dbReference>
<sequence length="610" mass="63287">MIRAFSFPVSPERGRLRGWLEGSLAGLCELHWLRERQEYRVQQALRLAQPGMGGAEAEDEEDAEEDEDAAAARRAAAALEEQLEALPGLIWDLGQQLGDLSLESGGLDQESGRSSGFYEDPSSTGGPDSPPSTFCGDSGFSGSGSYGRLGPSDPRGIYASERPKSLGDASPSAPESVGARVAVPRSFSAPYPTAAAGAETCSSAERRARAGPFLTPSPLHAVALRSPRPSGRVPCGSPDGAASRPLDGYISALLRRRRRRGAGQPRTSPGGADGGARRQNGARPRPPEASPPPGGARPAREPSTERAWAAAWEAEVPPEPAPPAAASPPSSPAEGRLVKAQYIPGAPAASRGLPGRAARRRAPPLTRGRSVEQSPPRERPRAAGRRGRLAEPSGRRGSPRARKAARSQSETSLLGRAHAAPPPKYPTAERDEPRPPRPRRGPAPTPTVQACRRWRSTAEIDAPDGRRPRARVPAPRGPAPSPSAPPRRLLYGCAGSDSECSAVGRPVPLGRRMPSGCAPGGYGESESSASEGESPAFSSASSDSDGSGGLVWPQQLVAAAGASPSGPGGAAGGGTPAGPAKVFVKIKASHALKKKILRFRSGSLKVMTTV</sequence>
<comment type="function">
    <text evidence="1">May be involved in regulation of intracellular signaling pathways during development. Specifically thought to play a role in canonical and/or non-canonical Wnt signaling pathways through interaction with DSH (Dishevelled) family proteins (By similarity).</text>
</comment>
<comment type="subunit">
    <text evidence="6">Can form homodimers and heterodimers with DACT1 or DACT3. Interacts with CSNK1D, PKA catalytic subunit, PKC-type kinase, DVL1, DVL2, DVL3, VANGL1, VANGL2 and CTNND1.</text>
</comment>
<comment type="interaction">
    <interactant intactId="EBI-6392520">
        <id>Q0PHV7</id>
    </interactant>
    <interactant intactId="EBI-3870250">
        <id>Q8R4A3</id>
        <label>Dact1</label>
    </interactant>
    <organismsDiffer>false</organismsDiffer>
    <experiments>2</experiments>
</comment>
<comment type="interaction">
    <interactant intactId="EBI-6392520">
        <id>Q0PHV7</id>
    </interactant>
    <interactant intactId="EBI-6392494">
        <id>Q7TN08</id>
        <label>Dact2</label>
    </interactant>
    <organismsDiffer>false</organismsDiffer>
    <experiments>2</experiments>
</comment>
<comment type="interaction">
    <interactant intactId="EBI-6392520">
        <id>Q0PHV7</id>
    </interactant>
    <interactant intactId="EBI-6392520">
        <id>Q0PHV7</id>
        <label>Dact3</label>
    </interactant>
    <organismsDiffer>false</organismsDiffer>
    <experiments>2</experiments>
</comment>
<comment type="tissue specificity">
    <text evidence="5">Expressed in brain and uterus.</text>
</comment>
<comment type="developmental stage">
    <text evidence="5">Expression peaks at 10.5 dpc, then declines. Expressed in the ventral region of maturing somites, limb bud and branchial arch mesenchyme, and in the developing central nervous system.</text>
</comment>
<comment type="domain">
    <text evidence="1">The C-terminal PDZ-binding motif may mediate interaction with the PDZ domains of DSH (Dishevelled) family proteins.</text>
</comment>
<comment type="similarity">
    <text evidence="7">Belongs to the dapper family.</text>
</comment>
<evidence type="ECO:0000250" key="1"/>
<evidence type="ECO:0000250" key="2">
    <source>
        <dbReference type="UniProtKB" id="Q96B18"/>
    </source>
</evidence>
<evidence type="ECO:0000255" key="3"/>
<evidence type="ECO:0000256" key="4">
    <source>
        <dbReference type="SAM" id="MobiDB-lite"/>
    </source>
</evidence>
<evidence type="ECO:0000269" key="5">
    <source>
    </source>
</evidence>
<evidence type="ECO:0000269" key="6">
    <source>
    </source>
</evidence>
<evidence type="ECO:0000305" key="7"/>
<evidence type="ECO:0007744" key="8">
    <source>
    </source>
</evidence>
<evidence type="ECO:0007744" key="9">
    <source>
    </source>
</evidence>
<name>DACT3_MOUSE</name>